<dbReference type="EMBL" id="CP000608">
    <property type="protein sequence ID" value="ABO47255.1"/>
    <property type="molecule type" value="Genomic_DNA"/>
</dbReference>
<dbReference type="RefSeq" id="WP_003016875.1">
    <property type="nucleotide sequence ID" value="NC_009257.1"/>
</dbReference>
<dbReference type="SMR" id="A4IZA5"/>
<dbReference type="GeneID" id="75263905"/>
<dbReference type="KEGG" id="ftw:FTW_1543"/>
<dbReference type="HOGENOM" id="CLU_069054_5_3_6"/>
<dbReference type="GO" id="GO:0051537">
    <property type="term" value="F:2 iron, 2 sulfur cluster binding"/>
    <property type="evidence" value="ECO:0007669"/>
    <property type="project" value="TreeGrafter"/>
</dbReference>
<dbReference type="GO" id="GO:0051539">
    <property type="term" value="F:4 iron, 4 sulfur cluster binding"/>
    <property type="evidence" value="ECO:0007669"/>
    <property type="project" value="TreeGrafter"/>
</dbReference>
<dbReference type="GO" id="GO:0005506">
    <property type="term" value="F:iron ion binding"/>
    <property type="evidence" value="ECO:0007669"/>
    <property type="project" value="UniProtKB-UniRule"/>
</dbReference>
<dbReference type="GO" id="GO:0016226">
    <property type="term" value="P:iron-sulfur cluster assembly"/>
    <property type="evidence" value="ECO:0007669"/>
    <property type="project" value="UniProtKB-UniRule"/>
</dbReference>
<dbReference type="FunFam" id="2.60.300.12:FF:000002">
    <property type="entry name" value="Iron-sulfur cluster insertion protein ErpA"/>
    <property type="match status" value="1"/>
</dbReference>
<dbReference type="Gene3D" id="2.60.300.12">
    <property type="entry name" value="HesB-like domain"/>
    <property type="match status" value="1"/>
</dbReference>
<dbReference type="HAMAP" id="MF_01380">
    <property type="entry name" value="Fe_S_insert_ErpA"/>
    <property type="match status" value="1"/>
</dbReference>
<dbReference type="InterPro" id="IPR000361">
    <property type="entry name" value="FeS_biogenesis"/>
</dbReference>
<dbReference type="InterPro" id="IPR016092">
    <property type="entry name" value="FeS_cluster_insertion"/>
</dbReference>
<dbReference type="InterPro" id="IPR017870">
    <property type="entry name" value="FeS_cluster_insertion_CS"/>
</dbReference>
<dbReference type="InterPro" id="IPR023063">
    <property type="entry name" value="FeS_cluster_insertion_RrpA"/>
</dbReference>
<dbReference type="InterPro" id="IPR035903">
    <property type="entry name" value="HesB-like_dom_sf"/>
</dbReference>
<dbReference type="NCBIfam" id="TIGR00049">
    <property type="entry name" value="iron-sulfur cluster assembly accessory protein"/>
    <property type="match status" value="1"/>
</dbReference>
<dbReference type="NCBIfam" id="NF010147">
    <property type="entry name" value="PRK13623.1"/>
    <property type="match status" value="1"/>
</dbReference>
<dbReference type="PANTHER" id="PTHR43011">
    <property type="entry name" value="IRON-SULFUR CLUSTER ASSEMBLY 2 HOMOLOG, MITOCHONDRIAL"/>
    <property type="match status" value="1"/>
</dbReference>
<dbReference type="PANTHER" id="PTHR43011:SF1">
    <property type="entry name" value="IRON-SULFUR CLUSTER ASSEMBLY 2 HOMOLOG, MITOCHONDRIAL"/>
    <property type="match status" value="1"/>
</dbReference>
<dbReference type="Pfam" id="PF01521">
    <property type="entry name" value="Fe-S_biosyn"/>
    <property type="match status" value="1"/>
</dbReference>
<dbReference type="SUPFAM" id="SSF89360">
    <property type="entry name" value="HesB-like domain"/>
    <property type="match status" value="1"/>
</dbReference>
<dbReference type="PROSITE" id="PS01152">
    <property type="entry name" value="HESB"/>
    <property type="match status" value="1"/>
</dbReference>
<protein>
    <recommendedName>
        <fullName evidence="1">Iron-sulfur cluster insertion protein ErpA</fullName>
    </recommendedName>
</protein>
<proteinExistence type="inferred from homology"/>
<sequence length="116" mass="12658">MSEVVQSVDPINFTEAASLKVKELIEEEGDNSLSLRVYITGGGCSGFQYAFAFDNEVKEDDMVITKNGVRLLVDSMSFQYLVGADVDYKDDVEGAYFVIRNPNAKTTCGCGSSFSV</sequence>
<reference key="1">
    <citation type="journal article" date="2007" name="PLoS ONE">
        <title>Complete genomic characterization of a pathogenic A.II strain of Francisella tularensis subspecies tularensis.</title>
        <authorList>
            <person name="Beckstrom-Sternberg S.M."/>
            <person name="Auerbach R.K."/>
            <person name="Godbole S."/>
            <person name="Pearson J.V."/>
            <person name="Beckstrom-Sternberg J.S."/>
            <person name="Deng Z."/>
            <person name="Munk C."/>
            <person name="Kubota K."/>
            <person name="Zhou Y."/>
            <person name="Bruce D."/>
            <person name="Noronha J."/>
            <person name="Scheuermann R.H."/>
            <person name="Wang A."/>
            <person name="Wei X."/>
            <person name="Wang J."/>
            <person name="Hao J."/>
            <person name="Wagner D.M."/>
            <person name="Brettin T.S."/>
            <person name="Brown N."/>
            <person name="Gilna P."/>
            <person name="Keim P.S."/>
        </authorList>
    </citation>
    <scope>NUCLEOTIDE SEQUENCE [LARGE SCALE GENOMIC DNA]</scope>
    <source>
        <strain>WY96-3418</strain>
    </source>
</reference>
<accession>A4IZA5</accession>
<evidence type="ECO:0000255" key="1">
    <source>
        <dbReference type="HAMAP-Rule" id="MF_01380"/>
    </source>
</evidence>
<comment type="function">
    <text evidence="1">Required for insertion of 4Fe-4S clusters for at least IspG.</text>
</comment>
<comment type="cofactor">
    <cofactor evidence="1">
        <name>iron-sulfur cluster</name>
        <dbReference type="ChEBI" id="CHEBI:30408"/>
    </cofactor>
    <text evidence="1">Binds 1 iron-sulfur cluster per subunit.</text>
</comment>
<comment type="subunit">
    <text evidence="1">Homodimer.</text>
</comment>
<comment type="similarity">
    <text evidence="1">Belongs to the HesB/IscA family.</text>
</comment>
<name>ERPA_FRATW</name>
<organism>
    <name type="scientific">Francisella tularensis subsp. tularensis (strain WY96-3418)</name>
    <dbReference type="NCBI Taxonomy" id="418136"/>
    <lineage>
        <taxon>Bacteria</taxon>
        <taxon>Pseudomonadati</taxon>
        <taxon>Pseudomonadota</taxon>
        <taxon>Gammaproteobacteria</taxon>
        <taxon>Thiotrichales</taxon>
        <taxon>Francisellaceae</taxon>
        <taxon>Francisella</taxon>
    </lineage>
</organism>
<feature type="chain" id="PRO_0000311487" description="Iron-sulfur cluster insertion protein ErpA">
    <location>
        <begin position="1"/>
        <end position="116"/>
    </location>
</feature>
<feature type="binding site" evidence="1">
    <location>
        <position position="44"/>
    </location>
    <ligand>
        <name>iron-sulfur cluster</name>
        <dbReference type="ChEBI" id="CHEBI:30408"/>
    </ligand>
</feature>
<feature type="binding site" evidence="1">
    <location>
        <position position="108"/>
    </location>
    <ligand>
        <name>iron-sulfur cluster</name>
        <dbReference type="ChEBI" id="CHEBI:30408"/>
    </ligand>
</feature>
<feature type="binding site" evidence="1">
    <location>
        <position position="110"/>
    </location>
    <ligand>
        <name>iron-sulfur cluster</name>
        <dbReference type="ChEBI" id="CHEBI:30408"/>
    </ligand>
</feature>
<gene>
    <name evidence="1" type="primary">erpA</name>
    <name type="ordered locus">FTW_1543</name>
</gene>
<keyword id="KW-0408">Iron</keyword>
<keyword id="KW-0411">Iron-sulfur</keyword>
<keyword id="KW-0479">Metal-binding</keyword>